<dbReference type="EMBL" id="CP000726">
    <property type="protein sequence ID" value="ABS35393.1"/>
    <property type="molecule type" value="Genomic_DNA"/>
</dbReference>
<dbReference type="RefSeq" id="WP_003387835.1">
    <property type="nucleotide sequence ID" value="NC_009697.1"/>
</dbReference>
<dbReference type="SMR" id="A7FQH8"/>
<dbReference type="GeneID" id="5184410"/>
<dbReference type="KEGG" id="cba:CLB_0191"/>
<dbReference type="HOGENOM" id="CLU_050669_0_1_9"/>
<dbReference type="GO" id="GO:0005886">
    <property type="term" value="C:plasma membrane"/>
    <property type="evidence" value="ECO:0007669"/>
    <property type="project" value="UniProtKB-SubCell"/>
</dbReference>
<dbReference type="GO" id="GO:0045259">
    <property type="term" value="C:proton-transporting ATP synthase complex"/>
    <property type="evidence" value="ECO:0007669"/>
    <property type="project" value="UniProtKB-KW"/>
</dbReference>
<dbReference type="GO" id="GO:0005524">
    <property type="term" value="F:ATP binding"/>
    <property type="evidence" value="ECO:0007669"/>
    <property type="project" value="UniProtKB-UniRule"/>
</dbReference>
<dbReference type="GO" id="GO:0046933">
    <property type="term" value="F:proton-transporting ATP synthase activity, rotational mechanism"/>
    <property type="evidence" value="ECO:0007669"/>
    <property type="project" value="UniProtKB-UniRule"/>
</dbReference>
<dbReference type="GO" id="GO:0042777">
    <property type="term" value="P:proton motive force-driven plasma membrane ATP synthesis"/>
    <property type="evidence" value="ECO:0007669"/>
    <property type="project" value="UniProtKB-UniRule"/>
</dbReference>
<dbReference type="CDD" id="cd12151">
    <property type="entry name" value="F1-ATPase_gamma"/>
    <property type="match status" value="1"/>
</dbReference>
<dbReference type="FunFam" id="3.40.1380.10:FF:000012">
    <property type="entry name" value="ATP synthase gamma chain"/>
    <property type="match status" value="1"/>
</dbReference>
<dbReference type="Gene3D" id="3.40.1380.10">
    <property type="match status" value="1"/>
</dbReference>
<dbReference type="Gene3D" id="1.10.287.80">
    <property type="entry name" value="ATP synthase, gamma subunit, helix hairpin domain"/>
    <property type="match status" value="1"/>
</dbReference>
<dbReference type="HAMAP" id="MF_00815">
    <property type="entry name" value="ATP_synth_gamma_bact"/>
    <property type="match status" value="1"/>
</dbReference>
<dbReference type="InterPro" id="IPR035968">
    <property type="entry name" value="ATP_synth_F1_ATPase_gsu"/>
</dbReference>
<dbReference type="InterPro" id="IPR000131">
    <property type="entry name" value="ATP_synth_F1_gsu"/>
</dbReference>
<dbReference type="InterPro" id="IPR023632">
    <property type="entry name" value="ATP_synth_F1_gsu_CS"/>
</dbReference>
<dbReference type="NCBIfam" id="TIGR01146">
    <property type="entry name" value="ATPsyn_F1gamma"/>
    <property type="match status" value="1"/>
</dbReference>
<dbReference type="PANTHER" id="PTHR11693">
    <property type="entry name" value="ATP SYNTHASE GAMMA CHAIN"/>
    <property type="match status" value="1"/>
</dbReference>
<dbReference type="PANTHER" id="PTHR11693:SF22">
    <property type="entry name" value="ATP SYNTHASE SUBUNIT GAMMA, MITOCHONDRIAL"/>
    <property type="match status" value="1"/>
</dbReference>
<dbReference type="Pfam" id="PF00231">
    <property type="entry name" value="ATP-synt"/>
    <property type="match status" value="1"/>
</dbReference>
<dbReference type="PRINTS" id="PR00126">
    <property type="entry name" value="ATPASEGAMMA"/>
</dbReference>
<dbReference type="SUPFAM" id="SSF52943">
    <property type="entry name" value="ATP synthase (F1-ATPase), gamma subunit"/>
    <property type="match status" value="1"/>
</dbReference>
<dbReference type="PROSITE" id="PS00153">
    <property type="entry name" value="ATPASE_GAMMA"/>
    <property type="match status" value="1"/>
</dbReference>
<accession>A7FQH8</accession>
<feature type="chain" id="PRO_1000053191" description="ATP synthase gamma chain">
    <location>
        <begin position="1"/>
        <end position="282"/>
    </location>
</feature>
<sequence>MAGAGLIGIRRRIKSVTNIRKITKAMGLVSTAKLRKARVNLEINKKYYNEYKIILKDIINFIEDSNIYIDGNGSHKKLYVIFTSDSGLCGSFNINIINNVINEIKEDKENSLVIVIGQKGRMYLKKLGINTLAEYIEIPDVPTTKEAGTIAKNIIKLYSSKEVGEVFLVYSEFYSPVKQQVLINKILPFTKENKSDNKYIEFNPPVTQLMDEILENYLKATILNCFSNSKASENGSRMTAMNGATDNANDLLDNLDLQFNRLRQSAITQEISEIVGGAEAQR</sequence>
<name>ATPG_CLOB1</name>
<evidence type="ECO:0000255" key="1">
    <source>
        <dbReference type="HAMAP-Rule" id="MF_00815"/>
    </source>
</evidence>
<proteinExistence type="inferred from homology"/>
<organism>
    <name type="scientific">Clostridium botulinum (strain ATCC 19397 / Type A)</name>
    <dbReference type="NCBI Taxonomy" id="441770"/>
    <lineage>
        <taxon>Bacteria</taxon>
        <taxon>Bacillati</taxon>
        <taxon>Bacillota</taxon>
        <taxon>Clostridia</taxon>
        <taxon>Eubacteriales</taxon>
        <taxon>Clostridiaceae</taxon>
        <taxon>Clostridium</taxon>
    </lineage>
</organism>
<comment type="function">
    <text evidence="1">Produces ATP from ADP in the presence of a proton gradient across the membrane. The gamma chain is believed to be important in regulating ATPase activity and the flow of protons through the CF(0) complex.</text>
</comment>
<comment type="subunit">
    <text evidence="1">F-type ATPases have 2 components, CF(1) - the catalytic core - and CF(0) - the membrane proton channel. CF(1) has five subunits: alpha(3), beta(3), gamma(1), delta(1), epsilon(1). CF(0) has three main subunits: a, b and c.</text>
</comment>
<comment type="subcellular location">
    <subcellularLocation>
        <location evidence="1">Cell membrane</location>
        <topology evidence="1">Peripheral membrane protein</topology>
    </subcellularLocation>
</comment>
<comment type="similarity">
    <text evidence="1">Belongs to the ATPase gamma chain family.</text>
</comment>
<keyword id="KW-0066">ATP synthesis</keyword>
<keyword id="KW-1003">Cell membrane</keyword>
<keyword id="KW-0139">CF(1)</keyword>
<keyword id="KW-0375">Hydrogen ion transport</keyword>
<keyword id="KW-0406">Ion transport</keyword>
<keyword id="KW-0472">Membrane</keyword>
<keyword id="KW-0813">Transport</keyword>
<reference key="1">
    <citation type="journal article" date="2007" name="PLoS ONE">
        <title>Analysis of the neurotoxin complex genes in Clostridium botulinum A1-A4 and B1 strains: BoNT/A3, /Ba4 and /B1 clusters are located within plasmids.</title>
        <authorList>
            <person name="Smith T.J."/>
            <person name="Hill K.K."/>
            <person name="Foley B.T."/>
            <person name="Detter J.C."/>
            <person name="Munk A.C."/>
            <person name="Bruce D.C."/>
            <person name="Doggett N.A."/>
            <person name="Smith L.A."/>
            <person name="Marks J.D."/>
            <person name="Xie G."/>
            <person name="Brettin T.S."/>
        </authorList>
    </citation>
    <scope>NUCLEOTIDE SEQUENCE [LARGE SCALE GENOMIC DNA]</scope>
    <source>
        <strain>ATCC 19397 / Type A</strain>
    </source>
</reference>
<protein>
    <recommendedName>
        <fullName evidence="1">ATP synthase gamma chain</fullName>
    </recommendedName>
    <alternativeName>
        <fullName evidence="1">ATP synthase F1 sector gamma subunit</fullName>
    </alternativeName>
    <alternativeName>
        <fullName evidence="1">F-ATPase gamma subunit</fullName>
    </alternativeName>
</protein>
<gene>
    <name evidence="1" type="primary">atpG</name>
    <name type="ordered locus">CLB_0191</name>
</gene>